<gene>
    <name type="primary">etfB</name>
    <name type="synonym">etfS</name>
    <name type="ordered locus">blr1377</name>
</gene>
<keyword id="KW-0249">Electron transport</keyword>
<keyword id="KW-0274">FAD</keyword>
<keyword id="KW-0285">Flavoprotein</keyword>
<keyword id="KW-1185">Reference proteome</keyword>
<keyword id="KW-0813">Transport</keyword>
<proteinExistence type="inferred from homology"/>
<accession>P53575</accession>
<dbReference type="EMBL" id="U32230">
    <property type="protein sequence ID" value="AAB00906.1"/>
    <property type="molecule type" value="Genomic_DNA"/>
</dbReference>
<dbReference type="EMBL" id="BA000040">
    <property type="protein sequence ID" value="BAC46642.1"/>
    <property type="molecule type" value="Genomic_DNA"/>
</dbReference>
<dbReference type="RefSeq" id="NP_768017.1">
    <property type="nucleotide sequence ID" value="NC_004463.1"/>
</dbReference>
<dbReference type="RefSeq" id="WP_011084195.1">
    <property type="nucleotide sequence ID" value="NC_004463.1"/>
</dbReference>
<dbReference type="SMR" id="P53575"/>
<dbReference type="STRING" id="224911.AAV28_03795"/>
<dbReference type="EnsemblBacteria" id="BAC46642">
    <property type="protein sequence ID" value="BAC46642"/>
    <property type="gene ID" value="BAC46642"/>
</dbReference>
<dbReference type="GeneID" id="46488645"/>
<dbReference type="KEGG" id="bja:blr1377"/>
<dbReference type="PATRIC" id="fig|224911.44.peg.799"/>
<dbReference type="eggNOG" id="COG2086">
    <property type="taxonomic scope" value="Bacteria"/>
</dbReference>
<dbReference type="HOGENOM" id="CLU_060196_0_0_5"/>
<dbReference type="InParanoid" id="P53575"/>
<dbReference type="OrthoDB" id="9781325at2"/>
<dbReference type="PhylomeDB" id="P53575"/>
<dbReference type="Proteomes" id="UP000002526">
    <property type="component" value="Chromosome"/>
</dbReference>
<dbReference type="GO" id="GO:0009055">
    <property type="term" value="F:electron transfer activity"/>
    <property type="evidence" value="ECO:0000318"/>
    <property type="project" value="GO_Central"/>
</dbReference>
<dbReference type="CDD" id="cd01714">
    <property type="entry name" value="ETF_beta"/>
    <property type="match status" value="1"/>
</dbReference>
<dbReference type="FunFam" id="3.40.50.620:FF:000011">
    <property type="entry name" value="Electron transfer flavoprotein subunit beta"/>
    <property type="match status" value="1"/>
</dbReference>
<dbReference type="Gene3D" id="3.40.50.620">
    <property type="entry name" value="HUPs"/>
    <property type="match status" value="1"/>
</dbReference>
<dbReference type="InterPro" id="IPR000049">
    <property type="entry name" value="ET-Flavoprotein_bsu_CS"/>
</dbReference>
<dbReference type="InterPro" id="IPR014730">
    <property type="entry name" value="ETF_a/b_N"/>
</dbReference>
<dbReference type="InterPro" id="IPR012255">
    <property type="entry name" value="ETF_b"/>
</dbReference>
<dbReference type="InterPro" id="IPR033948">
    <property type="entry name" value="ETF_beta_N"/>
</dbReference>
<dbReference type="InterPro" id="IPR014729">
    <property type="entry name" value="Rossmann-like_a/b/a_fold"/>
</dbReference>
<dbReference type="PANTHER" id="PTHR21294">
    <property type="entry name" value="ELECTRON TRANSFER FLAVOPROTEIN BETA-SUBUNIT"/>
    <property type="match status" value="1"/>
</dbReference>
<dbReference type="PANTHER" id="PTHR21294:SF8">
    <property type="entry name" value="ELECTRON TRANSFER FLAVOPROTEIN SUBUNIT BETA"/>
    <property type="match status" value="1"/>
</dbReference>
<dbReference type="Pfam" id="PF01012">
    <property type="entry name" value="ETF"/>
    <property type="match status" value="1"/>
</dbReference>
<dbReference type="PIRSF" id="PIRSF000090">
    <property type="entry name" value="Beta-ETF"/>
    <property type="match status" value="1"/>
</dbReference>
<dbReference type="SMART" id="SM00893">
    <property type="entry name" value="ETF"/>
    <property type="match status" value="1"/>
</dbReference>
<dbReference type="SUPFAM" id="SSF52402">
    <property type="entry name" value="Adenine nucleotide alpha hydrolases-like"/>
    <property type="match status" value="1"/>
</dbReference>
<dbReference type="PROSITE" id="PS01065">
    <property type="entry name" value="ETF_BETA"/>
    <property type="match status" value="1"/>
</dbReference>
<protein>
    <recommendedName>
        <fullName>Electron transfer flavoprotein subunit beta</fullName>
        <shortName>Beta-ETF</shortName>
    </recommendedName>
    <alternativeName>
        <fullName>Electron transfer flavoprotein small subunit</fullName>
        <shortName>ETFSS</shortName>
    </alternativeName>
</protein>
<organism>
    <name type="scientific">Bradyrhizobium diazoefficiens (strain JCM 10833 / BCRC 13528 / IAM 13628 / NBRC 14792 / USDA 110)</name>
    <dbReference type="NCBI Taxonomy" id="224911"/>
    <lineage>
        <taxon>Bacteria</taxon>
        <taxon>Pseudomonadati</taxon>
        <taxon>Pseudomonadota</taxon>
        <taxon>Alphaproteobacteria</taxon>
        <taxon>Hyphomicrobiales</taxon>
        <taxon>Nitrobacteraceae</taxon>
        <taxon>Bradyrhizobium</taxon>
    </lineage>
</organism>
<comment type="function">
    <text evidence="1">The electron transfer flavoprotein serves as a specific electron acceptor for other dehydrogenases. It transfers the electrons to the main respiratory chain via ETF-ubiquinone oxidoreductase (ETF dehydrogenase) (By similarity).</text>
</comment>
<comment type="cofactor">
    <cofactor evidence="1">
        <name>FAD</name>
        <dbReference type="ChEBI" id="CHEBI:57692"/>
    </cofactor>
    <text evidence="1">Binds 1 FAD per dimer.</text>
</comment>
<comment type="cofactor">
    <cofactor evidence="1">
        <name>AMP</name>
        <dbReference type="ChEBI" id="CHEBI:456215"/>
    </cofactor>
    <text evidence="1">Binds 1 AMP per subunit.</text>
</comment>
<comment type="subunit">
    <text>Heterodimer of an alpha and a beta subunit.</text>
</comment>
<comment type="similarity">
    <text evidence="2">Belongs to the ETF beta-subunit/FixA family.</text>
</comment>
<evidence type="ECO:0000250" key="1"/>
<evidence type="ECO:0000305" key="2"/>
<sequence length="249" mass="26512">MKVLVPVKRVVDYNVKVRVKGDGSGVELANVKMSMNPFDEIAVEEALRLKEGGKATEVVVVSIGPAQASETIRTGLAMGADRGILVKAEGTVEPLAVAKILKKVAEEEQPGLIILGKQAIDDDSNQTGQMLAALLGWSQATFASKLEVEGSDFKVTREVDGGLQTVKLKGPAIVTTDLRLNEPRYASLPNIMKAKKKPIAEKTVADYGVDVTARLEVLKTTEPAGRKAGVKVKDVAELVSKLKNEAGVL</sequence>
<reference key="1">
    <citation type="journal article" date="1996" name="Arch. Microbiol.">
        <title>Bradyrhizobium japonicum possesses two discrete sets of electron transfer flavoprotein genes: fixA, fixB and etfS, etfL.</title>
        <authorList>
            <person name="Weidenhaupt M."/>
            <person name="Rossi P."/>
            <person name="Beck C."/>
            <person name="Fischer H.-M."/>
            <person name="Hennecke H."/>
        </authorList>
    </citation>
    <scope>NUCLEOTIDE SEQUENCE [GENOMIC DNA]</scope>
    <source>
        <strain>USDA 3I1b110</strain>
    </source>
</reference>
<reference key="2">
    <citation type="journal article" date="2002" name="DNA Res.">
        <title>Complete genomic sequence of nitrogen-fixing symbiotic bacterium Bradyrhizobium japonicum USDA110.</title>
        <authorList>
            <person name="Kaneko T."/>
            <person name="Nakamura Y."/>
            <person name="Sato S."/>
            <person name="Minamisawa K."/>
            <person name="Uchiumi T."/>
            <person name="Sasamoto S."/>
            <person name="Watanabe A."/>
            <person name="Idesawa K."/>
            <person name="Iriguchi M."/>
            <person name="Kawashima K."/>
            <person name="Kohara M."/>
            <person name="Matsumoto M."/>
            <person name="Shimpo S."/>
            <person name="Tsuruoka H."/>
            <person name="Wada T."/>
            <person name="Yamada M."/>
            <person name="Tabata S."/>
        </authorList>
    </citation>
    <scope>NUCLEOTIDE SEQUENCE [LARGE SCALE GENOMIC DNA]</scope>
    <source>
        <strain>JCM 10833 / BCRC 13528 / IAM 13628 / NBRC 14792 / USDA 110</strain>
    </source>
</reference>
<name>ETFB_BRADU</name>
<feature type="chain" id="PRO_0000167876" description="Electron transfer flavoprotein subunit beta">
    <location>
        <begin position="1"/>
        <end position="249"/>
    </location>
</feature>
<feature type="sequence conflict" description="In Ref. 1; AAB00906." evidence="2" ref="1">
    <original>G</original>
    <variation>A</variation>
    <location>
        <position position="21"/>
    </location>
</feature>